<organism>
    <name type="scientific">Arabidopsis thaliana</name>
    <name type="common">Mouse-ear cress</name>
    <dbReference type="NCBI Taxonomy" id="3702"/>
    <lineage>
        <taxon>Eukaryota</taxon>
        <taxon>Viridiplantae</taxon>
        <taxon>Streptophyta</taxon>
        <taxon>Embryophyta</taxon>
        <taxon>Tracheophyta</taxon>
        <taxon>Spermatophyta</taxon>
        <taxon>Magnoliopsida</taxon>
        <taxon>eudicotyledons</taxon>
        <taxon>Gunneridae</taxon>
        <taxon>Pentapetalae</taxon>
        <taxon>rosids</taxon>
        <taxon>malvids</taxon>
        <taxon>Brassicales</taxon>
        <taxon>Brassicaceae</taxon>
        <taxon>Camelineae</taxon>
        <taxon>Arabidopsis</taxon>
    </lineage>
</organism>
<feature type="signal peptide" evidence="1">
    <location>
        <begin position="1"/>
        <end position="24"/>
    </location>
</feature>
<feature type="propeptide" id="PRO_0000457236" description="Removed in mature form" evidence="5">
    <location>
        <begin position="25"/>
        <end position="43"/>
    </location>
</feature>
<feature type="peptide" id="PRO_0000457237" description="Serine rich endogenous peptide 12" evidence="5">
    <location>
        <begin position="44"/>
        <end position="78"/>
    </location>
</feature>
<feature type="region of interest" description="Disordered" evidence="2">
    <location>
        <begin position="47"/>
        <end position="78"/>
    </location>
</feature>
<feature type="short sequence motif" description="SCOOP motif" evidence="11">
    <location>
        <begin position="50"/>
        <end position="64"/>
    </location>
</feature>
<feature type="short sequence motif" description="SxS motif essential for MIK2 binding" evidence="5">
    <location>
        <begin position="56"/>
        <end position="58"/>
    </location>
</feature>
<feature type="mutagenesis site" description="Abolished cleavage of the precursor PROSCOOP12 leading to the absence of SCOOP12 peptide release." evidence="5">
    <original>RR</original>
    <variation>AA</variation>
    <location>
        <begin position="42"/>
        <end position="43"/>
    </location>
</feature>
<feature type="mutagenesis site" description="Impaired seedling growth inhibition and altered induction of reactive oxygen species (ROS) burst. Loss of MIK2 binding and subsequent association with BAK1/SERK3, and impaired MIK2-dependent seedling and root growth inhibition and altered induction of reactive oxygen species (ROS) burst; when associated with A-58." evidence="3 5">
    <original>S</original>
    <variation>A</variation>
    <location>
        <position position="56"/>
    </location>
</feature>
<feature type="mutagenesis site" description="Impaired seedling growth inhibition. Loss of MIK2 binding and subsequent association with BAK1/SERK3, and impaired MIK2-dependent seedling and root growth inhibition and altered induction of reactive oxygen species (ROS) burst; when associated with A-56." evidence="3 5">
    <original>S</original>
    <variation>A</variation>
    <location>
        <position position="58"/>
    </location>
</feature>
<feature type="mutagenesis site" description="Abolished activity of SCOOP12 peptide." evidence="4">
    <location>
        <position position="64"/>
    </location>
</feature>
<dbReference type="EMBL" id="AB024024">
    <property type="status" value="NOT_ANNOTATED_CDS"/>
    <property type="molecule type" value="Genomic_DNA"/>
</dbReference>
<dbReference type="EMBL" id="CP002688">
    <property type="protein sequence ID" value="AED95135.1"/>
    <property type="molecule type" value="Genomic_DNA"/>
</dbReference>
<dbReference type="RefSeq" id="NP_001119372.1">
    <property type="nucleotide sequence ID" value="NM_001125900.2"/>
</dbReference>
<dbReference type="PDB" id="8WEC">
    <property type="method" value="X-ray"/>
    <property type="resolution" value="3.10 A"/>
    <property type="chains" value="C/F=52-64"/>
</dbReference>
<dbReference type="PDB" id="8WEE">
    <property type="method" value="X-ray"/>
    <property type="resolution" value="2.19 A"/>
    <property type="chains" value="B=52-64"/>
</dbReference>
<dbReference type="PDB" id="8YAA">
    <property type="method" value="EM"/>
    <property type="resolution" value="3.34 A"/>
    <property type="chains" value="B=52-64"/>
</dbReference>
<dbReference type="PDBsum" id="8WEC"/>
<dbReference type="PDBsum" id="8WEE"/>
<dbReference type="PDBsum" id="8YAA"/>
<dbReference type="EMDB" id="EMD-39093"/>
<dbReference type="SMR" id="B3H7I1"/>
<dbReference type="STRING" id="3702.B3H7I1"/>
<dbReference type="PaxDb" id="3702-AT5G44585.1"/>
<dbReference type="PRIDE" id="B3H7I1"/>
<dbReference type="EnsemblPlants" id="AT5G44585.1">
    <property type="protein sequence ID" value="AT5G44585.1"/>
    <property type="gene ID" value="AT5G44585"/>
</dbReference>
<dbReference type="GeneID" id="6241037"/>
<dbReference type="Gramene" id="AT5G44585.1">
    <property type="protein sequence ID" value="AT5G44585.1"/>
    <property type="gene ID" value="AT5G44585"/>
</dbReference>
<dbReference type="KEGG" id="ath:AT5G44585"/>
<dbReference type="Araport" id="AT5G44585"/>
<dbReference type="TAIR" id="AT5G44585"/>
<dbReference type="HOGENOM" id="CLU_2725635_0_0_1"/>
<dbReference type="InParanoid" id="B3H7I1"/>
<dbReference type="OMA" id="DPIANID"/>
<dbReference type="PRO" id="PR:B3H7I1"/>
<dbReference type="Proteomes" id="UP000006548">
    <property type="component" value="Chromosome 5"/>
</dbReference>
<dbReference type="ExpressionAtlas" id="B3H7I1">
    <property type="expression patterns" value="baseline and differential"/>
</dbReference>
<dbReference type="GO" id="GO:0048046">
    <property type="term" value="C:apoplast"/>
    <property type="evidence" value="ECO:0000314"/>
    <property type="project" value="UniProtKB"/>
</dbReference>
<dbReference type="GO" id="GO:0005886">
    <property type="term" value="C:plasma membrane"/>
    <property type="evidence" value="ECO:0007669"/>
    <property type="project" value="UniProtKB-SubCell"/>
</dbReference>
<dbReference type="GO" id="GO:0030275">
    <property type="term" value="F:LRR domain binding"/>
    <property type="evidence" value="ECO:0000314"/>
    <property type="project" value="UniProtKB"/>
</dbReference>
<dbReference type="GO" id="GO:0033612">
    <property type="term" value="F:receptor serine/threonine kinase binding"/>
    <property type="evidence" value="ECO:0000314"/>
    <property type="project" value="UniProtKB"/>
</dbReference>
<dbReference type="GO" id="GO:0045168">
    <property type="term" value="P:cell-cell signaling involved in cell fate commitment"/>
    <property type="evidence" value="ECO:0000314"/>
    <property type="project" value="UniProtKB"/>
</dbReference>
<dbReference type="GO" id="GO:0002213">
    <property type="term" value="P:defense response to insect"/>
    <property type="evidence" value="ECO:0000315"/>
    <property type="project" value="UniProtKB"/>
</dbReference>
<dbReference type="GO" id="GO:0009759">
    <property type="term" value="P:indole glucosinolate biosynthetic process"/>
    <property type="evidence" value="ECO:0000315"/>
    <property type="project" value="UniProtKB"/>
</dbReference>
<dbReference type="GO" id="GO:0009695">
    <property type="term" value="P:jasmonic acid biosynthetic process"/>
    <property type="evidence" value="ECO:0000315"/>
    <property type="project" value="UniProtKB"/>
</dbReference>
<dbReference type="GO" id="GO:2000378">
    <property type="term" value="P:negative regulation of reactive oxygen species metabolic process"/>
    <property type="evidence" value="ECO:0000314"/>
    <property type="project" value="UniProtKB"/>
</dbReference>
<dbReference type="GO" id="GO:0009664">
    <property type="term" value="P:plant-type cell wall organization"/>
    <property type="evidence" value="ECO:0000314"/>
    <property type="project" value="UniProtKB"/>
</dbReference>
<dbReference type="GO" id="GO:1900424">
    <property type="term" value="P:regulation of defense response to bacterium"/>
    <property type="evidence" value="ECO:0000315"/>
    <property type="project" value="TAIR"/>
</dbReference>
<dbReference type="GO" id="GO:1900150">
    <property type="term" value="P:regulation of defense response to fungus"/>
    <property type="evidence" value="ECO:0000315"/>
    <property type="project" value="TAIR"/>
</dbReference>
<dbReference type="GO" id="GO:2000377">
    <property type="term" value="P:regulation of reactive oxygen species metabolic process"/>
    <property type="evidence" value="ECO:0000270"/>
    <property type="project" value="TAIR"/>
</dbReference>
<dbReference type="GO" id="GO:2000280">
    <property type="term" value="P:regulation of root development"/>
    <property type="evidence" value="ECO:0000314"/>
    <property type="project" value="UniProtKB"/>
</dbReference>
<dbReference type="GO" id="GO:0010082">
    <property type="term" value="P:regulation of root meristem growth"/>
    <property type="evidence" value="ECO:0000314"/>
    <property type="project" value="UniProtKB"/>
</dbReference>
<dbReference type="GO" id="GO:0051510">
    <property type="term" value="P:regulation of unidimensional cell growth"/>
    <property type="evidence" value="ECO:0000314"/>
    <property type="project" value="UniProtKB"/>
</dbReference>
<dbReference type="GO" id="GO:0009617">
    <property type="term" value="P:response to bacterium"/>
    <property type="evidence" value="ECO:0000270"/>
    <property type="project" value="UniProtKB"/>
</dbReference>
<dbReference type="GO" id="GO:0080027">
    <property type="term" value="P:response to herbivore"/>
    <property type="evidence" value="ECO:0000315"/>
    <property type="project" value="UniProtKB"/>
</dbReference>
<dbReference type="GO" id="GO:0009625">
    <property type="term" value="P:response to insect"/>
    <property type="evidence" value="ECO:0000270"/>
    <property type="project" value="UniProtKB"/>
</dbReference>
<dbReference type="GO" id="GO:0009611">
    <property type="term" value="P:response to wounding"/>
    <property type="evidence" value="ECO:0000270"/>
    <property type="project" value="UniProtKB"/>
</dbReference>
<proteinExistence type="evidence at protein level"/>
<sequence length="78" mass="8240">MRNTISSKMGQVLIVLLLLCTVLCRTESALPSGQHSVLLTGRRLMGSGASGPVRSSQSSQAGGRFNDADPIAIDYGKY</sequence>
<name>SOP12_ARATH</name>
<keyword id="KW-0002">3D-structure</keyword>
<keyword id="KW-0052">Apoplast</keyword>
<keyword id="KW-1003">Cell membrane</keyword>
<keyword id="KW-0165">Cleavage on pair of basic residues</keyword>
<keyword id="KW-1184">Jasmonic acid signaling pathway</keyword>
<keyword id="KW-0472">Membrane</keyword>
<keyword id="KW-0611">Plant defense</keyword>
<keyword id="KW-1185">Reference proteome</keyword>
<keyword id="KW-0964">Secreted</keyword>
<keyword id="KW-0732">Signal</keyword>
<keyword id="KW-0346">Stress response</keyword>
<comment type="function">
    <text evidence="3 4 5 6 7">Brassicaceae-specific phytocytokine (plant endogenous peptide released into the apoplast) perceived by MIK2 in a BAK1/SERK3 and SERK4 coreceptors-dependent manner, that modulates various physiological and antimicrobial processes including root growth prevention, phospholipid signaling pathway activation (e.g. accumulation of phosphatidic acid (PA), but transient reduction of phosphatidylinositol 4,5-bisphosphate (PIP(2)) levels) and reactive oxygen species (ROS) response regulation (PubMed:30715439, PubMed:33514716, PubMed:34535661). Moderates primary root growth, and regulates root meristems and cell elongation; this root growth regulation is associated with the modulation of ROS metabolism and alteration of cell wall structure, and depends on variations in many genes expression (PubMed:34535661, PubMed:35639812). Promotes ROS (e.g. superoxide anion O(2) and hydrogen peroxide H(2)O(2)) production and MAPK (e.g. MPK3, MPK4 and MPK6) activation in a MIK2-dependent manner, thus leading to the up-regulation of immune-related marker genes (e.g. WRKY30, WRKY33 and CYP81F2) (PubMed:34535661, PubMed:35639812). Involved in biotic and oxidative stress responses; acts as a negative regulator of defense against necrotrophic pathogens such as the bacteria Erwinia amylovora and the fungus Alternaria brassicicola (PubMed:30715439). Able to prime defense responses against the pathogenic bacteria Pseudomonas syringae pv. tomato DC3000 (PubMed:30715439). Contributes to the triggering of defense responses toward generalist herbivores such as Spodoptera littoralis, probably via the activation of jasmonate and indole glucosinolate biosynthesis (PubMed:35401621). Triggers the expression of several PROSCOOP genes (e.g. PROSCOOP3, PROSCOOP7, PROSCOOP12 and PROSCOOP13) (PubMed:30715439).</text>
</comment>
<comment type="subunit">
    <text evidence="4 5">Interacts with MIK2 (via extracellular leucine-rich repeat domain); this interaction triggers the formation of complex between MIK2 and the BAK1/SERK3 and SERK4 coreceptors, and subsequent BAK1 activation by phosphorylation on 'Ser-612'.</text>
</comment>
<comment type="subcellular location">
    <subcellularLocation>
        <location evidence="5">Cell membrane</location>
    </subcellularLocation>
    <subcellularLocation>
        <location evidence="5">Secreted</location>
        <location evidence="5">Extracellular space</location>
        <location evidence="5">Apoplast</location>
    </subcellularLocation>
    <text evidence="5">The precursor of SCOOP12, PROSCOOP12, accumulates at the plasma membrane and is proteolytically cleaved to release the SCOOP12 in the apoplasm.</text>
</comment>
<comment type="tissue specificity">
    <text evidence="3 5">Mostly expressed in the whole root system, and, to a lower extent, in seedlings shoots.</text>
</comment>
<comment type="induction">
    <text evidence="3 6">Triggered by AtPep1 (PubMed:30715439). Induced by Erwinia amylovora, a bacterial pathogen (PubMed:30715439). Accumulates upon infection by generalist herbivores such as Spodoptera littoralis (PubMed:35401621).</text>
</comment>
<comment type="disruption phenotype">
    <text evidence="3 6 7">Enhanced root growth leading to longer primary roots due increased differentiated cells size (PubMed:30715439, PubMed:35639812). Increased accumulation of reactive oxygen species (ROS) such as superoxide anion O(2) and hydrogen peroxide H(2)O(2) (PubMed:35639812). Reduced susceptibility to necrogenic bacterial pathogens (e.g. Erwinia amylovora) and necrotrophic fungal pathogens (e.g. Alternaria brassicicola) infection and pathogenic induced cell death leading to the reduction of necrotic symptoms in leaves (PubMed:30715439). These symptoms are associated with disturbed expression of various genes related to stress responses (PubMed:30715439). Decreased resistance against the generalist herbivore Spodoptera littoralis, but not toward the specialist herbivore Pieris brassicae, and associated with reduced accumulation of jasmonic acid (JA), jasmonate-isoleucine and indolic glucosinolates due to a lower expression of several genes (e.g. CYP79B2, CYP79B3, CYP83B1 and GSTF9) (PubMed:35401621).</text>
</comment>
<comment type="similarity">
    <text evidence="10">Belongs to the serine rich endogenous peptide (SCOOP) phytocytokine family.</text>
</comment>
<gene>
    <name evidence="8 9" type="primary">PROSCOOP12</name>
    <name evidence="8 9" type="synonym">SCOOP12</name>
    <name evidence="12" type="ordered locus">At5g44585</name>
    <name evidence="13" type="ORF">K15C23</name>
</gene>
<evidence type="ECO:0000255" key="1"/>
<evidence type="ECO:0000256" key="2">
    <source>
        <dbReference type="SAM" id="MobiDB-lite"/>
    </source>
</evidence>
<evidence type="ECO:0000269" key="3">
    <source>
    </source>
</evidence>
<evidence type="ECO:0000269" key="4">
    <source>
    </source>
</evidence>
<evidence type="ECO:0000269" key="5">
    <source>
    </source>
</evidence>
<evidence type="ECO:0000269" key="6">
    <source>
    </source>
</evidence>
<evidence type="ECO:0000269" key="7">
    <source>
    </source>
</evidence>
<evidence type="ECO:0000303" key="8">
    <source>
    </source>
</evidence>
<evidence type="ECO:0000303" key="9">
    <source>
    </source>
</evidence>
<evidence type="ECO:0000305" key="10"/>
<evidence type="ECO:0000305" key="11">
    <source>
    </source>
</evidence>
<evidence type="ECO:0000312" key="12">
    <source>
        <dbReference type="Araport" id="AT5G44585"/>
    </source>
</evidence>
<evidence type="ECO:0000312" key="13">
    <source>
        <dbReference type="EMBL" id="AB024024"/>
    </source>
</evidence>
<reference key="1">
    <citation type="submission" date="1999-02" db="EMBL/GenBank/DDBJ databases">
        <title>Structural analysis of Arabidopsis thaliana chromosome 5. XI.</title>
        <authorList>
            <person name="Kaneko T."/>
            <person name="Katoh T."/>
            <person name="Asamizu E."/>
            <person name="Sato S."/>
            <person name="Nakamura Y."/>
            <person name="Kotani H."/>
            <person name="Tabata S."/>
        </authorList>
    </citation>
    <scope>NUCLEOTIDE SEQUENCE [LARGE SCALE GENOMIC DNA]</scope>
    <source>
        <strain>cv. Columbia</strain>
    </source>
</reference>
<reference key="2">
    <citation type="journal article" date="2017" name="Plant J.">
        <title>Araport11: a complete reannotation of the Arabidopsis thaliana reference genome.</title>
        <authorList>
            <person name="Cheng C.Y."/>
            <person name="Krishnakumar V."/>
            <person name="Chan A.P."/>
            <person name="Thibaud-Nissen F."/>
            <person name="Schobel S."/>
            <person name="Town C.D."/>
        </authorList>
    </citation>
    <scope>GENOME REANNOTATION</scope>
    <source>
        <strain>cv. Columbia</strain>
    </source>
</reference>
<reference key="3">
    <citation type="journal article" date="2019" name="J. Exp. Bot.">
        <title>The SCOOP12 peptide regulates defense response and root elongation in Arabidopsis thaliana.</title>
        <authorList>
            <person name="Gully K."/>
            <person name="Pelletier S."/>
            <person name="Guillou M.-C."/>
            <person name="Ferrand M."/>
            <person name="Aligon S."/>
            <person name="Pokotylo I."/>
            <person name="Perrin A."/>
            <person name="Vergne E."/>
            <person name="Fagard M."/>
            <person name="Ruelland E."/>
            <person name="Grappin P."/>
            <person name="Bucher E."/>
            <person name="Renou J.-P."/>
            <person name="Aubourg S."/>
        </authorList>
    </citation>
    <scope>FUNCTION</scope>
    <scope>MUTAGENESIS OF SER-56 AND SER-58</scope>
    <scope>DISRUPTION PHENOTYPE</scope>
    <scope>INDUCTION BY ERWINIA AMYLOVORA AND ATPEP1</scope>
    <scope>TISSUE SPECIFICITY</scope>
    <scope>GENE FAMILY</scope>
    <source>
        <strain>cv. Columbia</strain>
        <strain>cv. Wassilewskija</strain>
    </source>
</reference>
<reference key="4">
    <citation type="journal article" date="2021" name="Nat. Commun.">
        <title>Perception of a divergent family of phytocytokines by the Arabidopsis receptor kinase MIK2.</title>
        <authorList>
            <person name="Rhodes J."/>
            <person name="Yang H."/>
            <person name="Moussu S."/>
            <person name="Boutrot F."/>
            <person name="Santiago J."/>
            <person name="Zipfel C."/>
        </authorList>
    </citation>
    <scope>FUNCTION</scope>
    <scope>MUTAGENESIS OF ARG-64</scope>
    <scope>INTERACTION WITH MIK2</scope>
    <scope>GENE FAMILY</scope>
    <source>
        <strain>cv. Columbia</strain>
        <strain>cv. Wassilewskija-2</strain>
    </source>
</reference>
<reference key="5">
    <citation type="journal article" date="2021" name="Nat. Commun.">
        <title>The Arabidopsis MIK2 receptor elicits immunity by sensing a conserved signature from phytocytokines and microbes.</title>
        <authorList>
            <person name="Hou S."/>
            <person name="Liu D."/>
            <person name="Huang S."/>
            <person name="Luo D."/>
            <person name="Liu Z."/>
            <person name="Xiang Q."/>
            <person name="Wang P."/>
            <person name="Mu R."/>
            <person name="Han Z."/>
            <person name="Chen S."/>
            <person name="Chai J."/>
            <person name="Shan L."/>
            <person name="He P."/>
        </authorList>
    </citation>
    <scope>FUNCTION</scope>
    <scope>MUTAGENESIS OF 42-ARG-ARG-43; SER-56 AND SER-58</scope>
    <scope>PROTEOLYTIC CLEAVAGE</scope>
    <scope>IDENTIFICATION BY MASS SPECTROMETRY</scope>
    <scope>INTERACTION WITH MIK2</scope>
    <scope>TISSUE SPECIFICITY</scope>
    <scope>SUBCELLULAR LOCATION</scope>
    <scope>GENE FAMILY</scope>
    <scope>NOMENCLATURE</scope>
    <source>
        <strain>cv. Columbia</strain>
    </source>
</reference>
<reference key="6">
    <citation type="journal article" date="2022" name="Front. Plant Sci.">
        <title>The MIK2/SCOOP signaling system contributes to Arabidopsis resistance against herbivory by modulating jasmonate and indole glucosinolate biosynthesis.</title>
        <authorList>
            <person name="Stahl E."/>
            <person name="Fernandez Martin A."/>
            <person name="Glauser G."/>
            <person name="Guillou M.-C."/>
            <person name="Aubourg S."/>
            <person name="Renou J.-P."/>
            <person name="Reymond P."/>
        </authorList>
    </citation>
    <scope>FUNCTION</scope>
    <scope>DISRUPTION PHENOTYPE</scope>
    <scope>INDUCTION BY INSECT HERBIVORY</scope>
    <source>
        <strain>cv. Columbia</strain>
        <strain>cv. Wassilewskija</strain>
    </source>
</reference>
<reference key="7">
    <citation type="journal article" date="2022" name="J. Exp. Bot.">
        <title>SCOOP12 peptide acts on ROS homeostasis to modulate cell division and elongation in Arabidopsis primary root.</title>
        <authorList>
            <person name="Guillou M.-C."/>
            <person name="Vergne E."/>
            <person name="Aligon S."/>
            <person name="Pelletier S."/>
            <person name="Simonneau F."/>
            <person name="Rolland A."/>
            <person name="Chabout S."/>
            <person name="Mouille G."/>
            <person name="Gully K."/>
            <person name="Grappin P."/>
            <person name="Montrichard F."/>
            <person name="Aubourg S."/>
            <person name="Renou J.-P."/>
        </authorList>
    </citation>
    <scope>FUNCTION</scope>
    <scope>DISRUPTION PHENOTYPE</scope>
    <source>
        <strain>cv. Columbia</strain>
        <strain>cv. Wassilewskija</strain>
    </source>
</reference>
<protein>
    <recommendedName>
        <fullName evidence="8 9">Serine rich endogenous peptide 12</fullName>
        <shortName evidence="8 9">AtSCOOP12</shortName>
    </recommendedName>
    <alternativeName>
        <fullName evidence="8 9">Phytocytokine SCOOP12</fullName>
    </alternativeName>
    <alternativeName>
        <fullName evidence="8 9">Precursor of serine rich endogenous peptide phytocytokine 12</fullName>
    </alternativeName>
</protein>
<accession>B3H7I1</accession>